<accession>P39972</accession>
<accession>D3DLH7</accession>
<organism>
    <name type="scientific">Saccharomyces cerevisiae (strain ATCC 204508 / S288c)</name>
    <name type="common">Baker's yeast</name>
    <dbReference type="NCBI Taxonomy" id="559292"/>
    <lineage>
        <taxon>Eukaryota</taxon>
        <taxon>Fungi</taxon>
        <taxon>Dikarya</taxon>
        <taxon>Ascomycota</taxon>
        <taxon>Saccharomycotina</taxon>
        <taxon>Saccharomycetes</taxon>
        <taxon>Saccharomycetales</taxon>
        <taxon>Saccharomycetaceae</taxon>
        <taxon>Saccharomyces</taxon>
    </lineage>
</organism>
<reference key="1">
    <citation type="journal article" date="1997" name="Nature">
        <title>The nucleotide sequence of Saccharomyces cerevisiae chromosome V.</title>
        <authorList>
            <person name="Dietrich F.S."/>
            <person name="Mulligan J.T."/>
            <person name="Hennessy K.M."/>
            <person name="Yelton M.A."/>
            <person name="Allen E."/>
            <person name="Araujo R."/>
            <person name="Aviles E."/>
            <person name="Berno A."/>
            <person name="Brennan T."/>
            <person name="Carpenter J."/>
            <person name="Chen E."/>
            <person name="Cherry J.M."/>
            <person name="Chung E."/>
            <person name="Duncan M."/>
            <person name="Guzman E."/>
            <person name="Hartzell G."/>
            <person name="Hunicke-Smith S."/>
            <person name="Hyman R.W."/>
            <person name="Kayser A."/>
            <person name="Komp C."/>
            <person name="Lashkari D."/>
            <person name="Lew H."/>
            <person name="Lin D."/>
            <person name="Mosedale D."/>
            <person name="Nakahara K."/>
            <person name="Namath A."/>
            <person name="Norgren R."/>
            <person name="Oefner P."/>
            <person name="Oh C."/>
            <person name="Petel F.X."/>
            <person name="Roberts D."/>
            <person name="Sehl P."/>
            <person name="Schramm S."/>
            <person name="Shogren T."/>
            <person name="Smith V."/>
            <person name="Taylor P."/>
            <person name="Wei Y."/>
            <person name="Botstein D."/>
            <person name="Davis R.W."/>
        </authorList>
    </citation>
    <scope>NUCLEOTIDE SEQUENCE [LARGE SCALE GENOMIC DNA]</scope>
    <source>
        <strain>ATCC 204508 / S288c</strain>
    </source>
</reference>
<reference key="2">
    <citation type="journal article" date="2014" name="G3 (Bethesda)">
        <title>The reference genome sequence of Saccharomyces cerevisiae: Then and now.</title>
        <authorList>
            <person name="Engel S.R."/>
            <person name="Dietrich F.S."/>
            <person name="Fisk D.G."/>
            <person name="Binkley G."/>
            <person name="Balakrishnan R."/>
            <person name="Costanzo M.C."/>
            <person name="Dwight S.S."/>
            <person name="Hitz B.C."/>
            <person name="Karra K."/>
            <person name="Nash R.S."/>
            <person name="Weng S."/>
            <person name="Wong E.D."/>
            <person name="Lloyd P."/>
            <person name="Skrzypek M.S."/>
            <person name="Miyasato S.R."/>
            <person name="Simison M."/>
            <person name="Cherry J.M."/>
        </authorList>
    </citation>
    <scope>GENOME REANNOTATION</scope>
    <source>
        <strain>ATCC 204508 / S288c</strain>
    </source>
</reference>
<keyword id="KW-1185">Reference proteome</keyword>
<name>YEI5_YEAST</name>
<gene>
    <name type="ordered locus">YEL075C</name>
</gene>
<sequence length="122" mass="13994">MKVSDRRKFEKANFDEFESALNNKNDLVHCPSITLFESIPTEVRSFYEDEKSGLIKVVKFRTGAMDRKRSFEKVVISVMVGKNVKKFLTFVEDEPDFQGGPIPSNKPRDGLHVVSSAYFEIQ</sequence>
<dbReference type="EMBL" id="U18795">
    <property type="protein sequence ID" value="AAB65012.1"/>
    <property type="molecule type" value="Genomic_DNA"/>
</dbReference>
<dbReference type="EMBL" id="BK006939">
    <property type="protein sequence ID" value="DAA07581.1"/>
    <property type="molecule type" value="Genomic_DNA"/>
</dbReference>
<dbReference type="RefSeq" id="NP_010839.1">
    <property type="nucleotide sequence ID" value="NM_001178890.1"/>
</dbReference>
<dbReference type="BioGRID" id="36657">
    <property type="interactions" value="10"/>
</dbReference>
<dbReference type="DIP" id="DIP-5119N"/>
<dbReference type="FunCoup" id="P39972">
    <property type="interactions" value="27"/>
</dbReference>
<dbReference type="STRING" id="4932.YEL075C"/>
<dbReference type="PaxDb" id="4932-YEL075C"/>
<dbReference type="PeptideAtlas" id="P39972"/>
<dbReference type="EnsemblFungi" id="YEL075C_mRNA">
    <property type="protein sequence ID" value="YEL075C"/>
    <property type="gene ID" value="YEL075C"/>
</dbReference>
<dbReference type="GeneID" id="856634"/>
<dbReference type="KEGG" id="sce:YEL075C"/>
<dbReference type="AGR" id="SGD:S000000801"/>
<dbReference type="SGD" id="S000000801">
    <property type="gene designation" value="YEL075C"/>
</dbReference>
<dbReference type="VEuPathDB" id="FungiDB:YEL075C"/>
<dbReference type="GeneTree" id="ENSGT00940000153173"/>
<dbReference type="HOGENOM" id="CLU_2122975_0_0_1"/>
<dbReference type="InParanoid" id="P39972"/>
<dbReference type="OrthoDB" id="4044474at2759"/>
<dbReference type="BioCyc" id="YEAST:G3O-30188-MONOMER"/>
<dbReference type="PRO" id="PR:P39972"/>
<dbReference type="Proteomes" id="UP000002311">
    <property type="component" value="Chromosome V"/>
</dbReference>
<dbReference type="RNAct" id="P39972">
    <property type="molecule type" value="protein"/>
</dbReference>
<dbReference type="InterPro" id="IPR021646">
    <property type="entry name" value="Sir1_ORC-binding"/>
</dbReference>
<dbReference type="InterPro" id="IPR050978">
    <property type="entry name" value="Y'_ATP-dependent_helicase"/>
</dbReference>
<dbReference type="PANTHER" id="PTHR31583">
    <property type="match status" value="1"/>
</dbReference>
<dbReference type="PANTHER" id="PTHR31583:SF2">
    <property type="match status" value="1"/>
</dbReference>
<dbReference type="Pfam" id="PF11603">
    <property type="entry name" value="Sir1"/>
    <property type="match status" value="1"/>
</dbReference>
<protein>
    <recommendedName>
        <fullName>Uncharacterized protein YEL075C</fullName>
    </recommendedName>
</protein>
<feature type="chain" id="PRO_0000202598" description="Uncharacterized protein YEL075C">
    <location>
        <begin position="1"/>
        <end position="122"/>
    </location>
</feature>
<proteinExistence type="predicted"/>